<protein>
    <recommendedName>
        <fullName evidence="1">Chromosome partition protein Smc</fullName>
    </recommendedName>
</protein>
<sequence length="1203" mass="131027">MYLKSLTLKGFKSFASPTTLRFEPGITAVVGPNGSGKSNVVDALAWVMGEQGAKTLRGSKMEDVIFAGTLSRAPLGRAEVTLIIDNSDNVLPIEYSEVSITRRMFRDGASEYEINGSSCRLMDVQELLSDSGIGREMHVIVGQGKLDQILQSRPEDRRTFIEEAAGILKYRRRKEKALRKLDAMSANLARLTDLTTELRRQLKPLSRQAEVARRAATIQADLRDARLRLAADDLVSRQGQRDAIVEAETMMRRDHDEAAARLAVASEELAAHEAALTELSGRAESVQQIWFGLSTLVERVSATIRIAGERAYHLDVDPATPSDTDPDVLEAEAQQMEVAEQQLLAELAVARTQLEAARAELADRERHAVEADKAHLEAVRAEADRREGLALLAGQVETMRARIESIDDSVARLSERIEEVTARTQQILAEFETVQGRVGELDQSEVHLDEQHERAVAALRFANERVAELQSAERDAERQVVSLRARIDALTMGLERKDGAAWLARNYSDTGLLGSIAKLVKVRPGYEAALAAVLGPAADALAVDSLGAARSALTALKEADAGRATLVLADWLADAGPACVTGLPDGAQRALDLIEAPPWLQGALIAMLYGVVVVNYLAEALGVVDICPQLRVVTVDGDLVGAGWVSGGSGRRLSTLEVTSEIDKAGAELAAAEAHMAQLNAALSGALSEQVAHSDATEQALVALNESDTAILSMYDQLGRLGQEVRAAEAEWESLLAQREELEARRVSILEEVVELETRLHNVEQIQHVHALDENSAAARQLIVAAAEEARGVEVEALLAVRTAEERVNAVCGRANSLRRAAAAEREVRLRDQQAHAARIRAAAVAAAVTDCGQLLASRLTQAVDLAARHRDALATERQQRSVAIAAVRYEVNTLRVRLATLTDSLHRDEVANVQAALRIEQLEQLVLEQFGIAPVDLIAEYGPQVALLPTELEMAEFQQARERGEQVTSPAPMPYDRATQERRAKRAERELAELGRVNPLALEEFAALEERYNFLSTQLEDVKGARKDLLDVVAEVDARILQVFSDAFVDVEREFRGVFTSLFPGGEGRLRLTDPDDMLTTGIEVEARPSGKKVSRLSLLSGGEKSLIAVAMLVAIFKARPSPFYIMDEVEAALDDVNLCRLIGVFEQLRGQSQLIIITHQKPTMEVADTLYGVTMQGDGITAVISQRMRGQQVESLVTSSS</sequence>
<keyword id="KW-0067">ATP-binding</keyword>
<keyword id="KW-0175">Coiled coil</keyword>
<keyword id="KW-0963">Cytoplasm</keyword>
<keyword id="KW-0238">DNA-binding</keyword>
<keyword id="KW-0547">Nucleotide-binding</keyword>
<keyword id="KW-1185">Reference proteome</keyword>
<name>SMC_MYCLE</name>
<evidence type="ECO:0000255" key="1">
    <source>
        <dbReference type="HAMAP-Rule" id="MF_01894"/>
    </source>
</evidence>
<proteinExistence type="inferred from homology"/>
<accession>Q9CBT5</accession>
<accession>Q9X7D0</accession>
<organism>
    <name type="scientific">Mycobacterium leprae (strain TN)</name>
    <dbReference type="NCBI Taxonomy" id="272631"/>
    <lineage>
        <taxon>Bacteria</taxon>
        <taxon>Bacillati</taxon>
        <taxon>Actinomycetota</taxon>
        <taxon>Actinomycetes</taxon>
        <taxon>Mycobacteriales</taxon>
        <taxon>Mycobacteriaceae</taxon>
        <taxon>Mycobacterium</taxon>
    </lineage>
</organism>
<comment type="function">
    <text evidence="1">Required for chromosome condensation and partitioning.</text>
</comment>
<comment type="subunit">
    <text evidence="1">Homodimer.</text>
</comment>
<comment type="subcellular location">
    <subcellularLocation>
        <location evidence="1">Cytoplasm</location>
    </subcellularLocation>
</comment>
<comment type="domain">
    <text evidence="1">Contains large globular domains required for ATP hydrolysis at each terminus and a third globular domain forming a flexible SMC hinge near the middle of the molecule. These domains are separated by coiled-coil structures.</text>
</comment>
<comment type="similarity">
    <text evidence="1">Belongs to the SMC family.</text>
</comment>
<reference key="1">
    <citation type="journal article" date="2001" name="Nature">
        <title>Massive gene decay in the leprosy bacillus.</title>
        <authorList>
            <person name="Cole S.T."/>
            <person name="Eiglmeier K."/>
            <person name="Parkhill J."/>
            <person name="James K.D."/>
            <person name="Thomson N.R."/>
            <person name="Wheeler P.R."/>
            <person name="Honore N."/>
            <person name="Garnier T."/>
            <person name="Churcher C.M."/>
            <person name="Harris D.E."/>
            <person name="Mungall K.L."/>
            <person name="Basham D."/>
            <person name="Brown D."/>
            <person name="Chillingworth T."/>
            <person name="Connor R."/>
            <person name="Davies R.M."/>
            <person name="Devlin K."/>
            <person name="Duthoy S."/>
            <person name="Feltwell T."/>
            <person name="Fraser A."/>
            <person name="Hamlin N."/>
            <person name="Holroyd S."/>
            <person name="Hornsby T."/>
            <person name="Jagels K."/>
            <person name="Lacroix C."/>
            <person name="Maclean J."/>
            <person name="Moule S."/>
            <person name="Murphy L.D."/>
            <person name="Oliver K."/>
            <person name="Quail M.A."/>
            <person name="Rajandream M.A."/>
            <person name="Rutherford K.M."/>
            <person name="Rutter S."/>
            <person name="Seeger K."/>
            <person name="Simon S."/>
            <person name="Simmonds M."/>
            <person name="Skelton J."/>
            <person name="Squares R."/>
            <person name="Squares S."/>
            <person name="Stevens K."/>
            <person name="Taylor K."/>
            <person name="Whitehead S."/>
            <person name="Woodward J.R."/>
            <person name="Barrell B.G."/>
        </authorList>
    </citation>
    <scope>NUCLEOTIDE SEQUENCE [LARGE SCALE GENOMIC DNA]</scope>
    <source>
        <strain>TN</strain>
    </source>
</reference>
<dbReference type="EMBL" id="AL583922">
    <property type="protein sequence ID" value="CAC30580.1"/>
    <property type="molecule type" value="Genomic_DNA"/>
</dbReference>
<dbReference type="EMBL" id="Z97369">
    <property type="protein sequence ID" value="CAB10595.1"/>
    <property type="molecule type" value="Genomic_DNA"/>
</dbReference>
<dbReference type="PIR" id="G87112">
    <property type="entry name" value="G87112"/>
</dbReference>
<dbReference type="RefSeq" id="NP_302121.1">
    <property type="nucleotide sequence ID" value="NC_002677.1"/>
</dbReference>
<dbReference type="RefSeq" id="WP_010908442.1">
    <property type="nucleotide sequence ID" value="NC_002677.1"/>
</dbReference>
<dbReference type="SMR" id="Q9CBT5"/>
<dbReference type="STRING" id="272631.gene:17575470"/>
<dbReference type="KEGG" id="mle:ML1629"/>
<dbReference type="PATRIC" id="fig|272631.5.peg.3070"/>
<dbReference type="Leproma" id="ML1629"/>
<dbReference type="eggNOG" id="COG1196">
    <property type="taxonomic scope" value="Bacteria"/>
</dbReference>
<dbReference type="HOGENOM" id="CLU_001042_2_0_11"/>
<dbReference type="OrthoDB" id="9808768at2"/>
<dbReference type="Proteomes" id="UP000000806">
    <property type="component" value="Chromosome"/>
</dbReference>
<dbReference type="GO" id="GO:0005694">
    <property type="term" value="C:chromosome"/>
    <property type="evidence" value="ECO:0007669"/>
    <property type="project" value="InterPro"/>
</dbReference>
<dbReference type="GO" id="GO:0005737">
    <property type="term" value="C:cytoplasm"/>
    <property type="evidence" value="ECO:0007669"/>
    <property type="project" value="UniProtKB-SubCell"/>
</dbReference>
<dbReference type="GO" id="GO:0005524">
    <property type="term" value="F:ATP binding"/>
    <property type="evidence" value="ECO:0007669"/>
    <property type="project" value="UniProtKB-UniRule"/>
</dbReference>
<dbReference type="GO" id="GO:0016887">
    <property type="term" value="F:ATP hydrolysis activity"/>
    <property type="evidence" value="ECO:0007669"/>
    <property type="project" value="InterPro"/>
</dbReference>
<dbReference type="GO" id="GO:0003677">
    <property type="term" value="F:DNA binding"/>
    <property type="evidence" value="ECO:0007669"/>
    <property type="project" value="UniProtKB-UniRule"/>
</dbReference>
<dbReference type="GO" id="GO:0030261">
    <property type="term" value="P:chromosome condensation"/>
    <property type="evidence" value="ECO:0007669"/>
    <property type="project" value="InterPro"/>
</dbReference>
<dbReference type="GO" id="GO:0007059">
    <property type="term" value="P:chromosome segregation"/>
    <property type="evidence" value="ECO:0007669"/>
    <property type="project" value="UniProtKB-UniRule"/>
</dbReference>
<dbReference type="GO" id="GO:0006260">
    <property type="term" value="P:DNA replication"/>
    <property type="evidence" value="ECO:0007669"/>
    <property type="project" value="UniProtKB-UniRule"/>
</dbReference>
<dbReference type="GO" id="GO:0007062">
    <property type="term" value="P:sister chromatid cohesion"/>
    <property type="evidence" value="ECO:0007669"/>
    <property type="project" value="InterPro"/>
</dbReference>
<dbReference type="CDD" id="cd03278">
    <property type="entry name" value="ABC_SMC_barmotin"/>
    <property type="match status" value="1"/>
</dbReference>
<dbReference type="FunFam" id="3.40.50.300:FF:000901">
    <property type="entry name" value="Chromosome partition protein Smc"/>
    <property type="match status" value="1"/>
</dbReference>
<dbReference type="FunFam" id="3.40.50.300:FF:000984">
    <property type="entry name" value="Chromosome partition protein Smc"/>
    <property type="match status" value="1"/>
</dbReference>
<dbReference type="Gene3D" id="1.20.1060.20">
    <property type="match status" value="1"/>
</dbReference>
<dbReference type="Gene3D" id="3.30.70.1620">
    <property type="match status" value="1"/>
</dbReference>
<dbReference type="Gene3D" id="3.40.50.300">
    <property type="entry name" value="P-loop containing nucleotide triphosphate hydrolases"/>
    <property type="match status" value="2"/>
</dbReference>
<dbReference type="HAMAP" id="MF_01894">
    <property type="entry name" value="Smc_prok"/>
    <property type="match status" value="1"/>
</dbReference>
<dbReference type="InterPro" id="IPR027417">
    <property type="entry name" value="P-loop_NTPase"/>
</dbReference>
<dbReference type="InterPro" id="IPR003395">
    <property type="entry name" value="RecF/RecN/SMC_N"/>
</dbReference>
<dbReference type="InterPro" id="IPR024704">
    <property type="entry name" value="SMC"/>
</dbReference>
<dbReference type="InterPro" id="IPR010935">
    <property type="entry name" value="SMC_hinge"/>
</dbReference>
<dbReference type="InterPro" id="IPR036277">
    <property type="entry name" value="SMC_hinge_sf"/>
</dbReference>
<dbReference type="InterPro" id="IPR011890">
    <property type="entry name" value="SMC_prok"/>
</dbReference>
<dbReference type="NCBIfam" id="TIGR02168">
    <property type="entry name" value="SMC_prok_B"/>
    <property type="match status" value="1"/>
</dbReference>
<dbReference type="PANTHER" id="PTHR43977">
    <property type="entry name" value="STRUCTURAL MAINTENANCE OF CHROMOSOMES PROTEIN 3"/>
    <property type="match status" value="1"/>
</dbReference>
<dbReference type="Pfam" id="PF06470">
    <property type="entry name" value="SMC_hinge"/>
    <property type="match status" value="1"/>
</dbReference>
<dbReference type="Pfam" id="PF02463">
    <property type="entry name" value="SMC_N"/>
    <property type="match status" value="1"/>
</dbReference>
<dbReference type="PIRSF" id="PIRSF005719">
    <property type="entry name" value="SMC"/>
    <property type="match status" value="1"/>
</dbReference>
<dbReference type="SMART" id="SM00968">
    <property type="entry name" value="SMC_hinge"/>
    <property type="match status" value="1"/>
</dbReference>
<dbReference type="SUPFAM" id="SSF52540">
    <property type="entry name" value="P-loop containing nucleoside triphosphate hydrolases"/>
    <property type="match status" value="1"/>
</dbReference>
<dbReference type="SUPFAM" id="SSF75553">
    <property type="entry name" value="Smc hinge domain"/>
    <property type="match status" value="1"/>
</dbReference>
<feature type="chain" id="PRO_0000119029" description="Chromosome partition protein Smc">
    <location>
        <begin position="1"/>
        <end position="1203"/>
    </location>
</feature>
<feature type="domain" description="SMC hinge">
    <location>
        <begin position="511"/>
        <end position="622"/>
    </location>
</feature>
<feature type="coiled-coil region" evidence="1">
    <location>
        <begin position="167"/>
        <end position="203"/>
    </location>
</feature>
<feature type="coiled-coil region" evidence="1">
    <location>
        <begin position="250"/>
        <end position="288"/>
    </location>
</feature>
<feature type="coiled-coil region" evidence="1">
    <location>
        <begin position="327"/>
        <end position="497"/>
    </location>
</feature>
<feature type="coiled-coil region" evidence="1">
    <location>
        <begin position="657"/>
        <end position="689"/>
    </location>
</feature>
<feature type="coiled-coil region" evidence="1">
    <location>
        <begin position="720"/>
        <end position="765"/>
    </location>
</feature>
<feature type="coiled-coil region" evidence="1">
    <location>
        <begin position="976"/>
        <end position="1030"/>
    </location>
</feature>
<feature type="binding site" evidence="1">
    <location>
        <begin position="32"/>
        <end position="39"/>
    </location>
    <ligand>
        <name>ATP</name>
        <dbReference type="ChEBI" id="CHEBI:30616"/>
    </ligand>
</feature>
<gene>
    <name evidence="1" type="primary">smc</name>
    <name type="ordered locus">ML1629</name>
    <name type="ORF">MLCB250.01</name>
</gene>